<sequence>MASEGPREPESEGIKLSADVKPFVPRFAGLNVAWLESSEACVFPSSAATYYPFVQEPPVTEQKIYTEDMAFGASTFPPQYLSSEITLHPYAYSPYTLDSTQNVYSVPGSQYLYNQPSCYRGFQTVKHRNENTCPLPQEMKALFKKKTYDEKKTYDQQKFDSERADGTISSEIKSARGSHHLSIYAENSLKSDGYHKRTDRKSRIIAKNVSTSKPEFEFTTLDFPELQGAENNMSEIQKQPKWGPVHSVSTDISLLREVVKPAAVLSKGEIVVKNNPNESVTANAATNSPSCTRELSWTPMGYVVRQTLSTELSAAPKNVTSMINLKTIASSADPKNVSIPSSEALSSDPSYNKEKHIIHPTQKSKASQGSDLEQNEASRKNKKKKEKSTSKYEVLTVQEPPRIEDAEEFPNLAVASERRDRIETPKFQSKQQPQDNFKNNVKKSQLPVQLDLGGMLTALEKKQHSQHAKQSSKPVVVSVGAVPVLSKECASGERGRRMSQMKTPHNPLDSSAPLMKKGKQREIPKAKKPTSLKKIILKERQERKQRLQENAVSPAFTSDDTQDGESGGDDQFPEQAELSGPEGMDELISTPSVEDKSEEPPGTELQRDTEASHLAPNHTTFPKIHSRRFRDYCSQMLSKEVDACVTDLLKELVRFQDRMYQKDPVKAKTKRRLVLGLREVLKHLKLKKLKCVIISPNCEKIQSKGGLDDTLHTIIDYACEQNIPFVFALNRKALGRSLNKAVPVSVVGIFSYDGAQDQFHKMVELTVAARQAYKTMLENVQQELVGEPRPQAPPSLPTQGPSCPAEDGPPALKEKEEPHYIEIWKKHLEAYSGCTLELEESLEASTSQMMNLNL</sequence>
<keyword id="KW-0002">3D-structure</keyword>
<keyword id="KW-0025">Alternative splicing</keyword>
<keyword id="KW-0225">Disease variant</keyword>
<keyword id="KW-0496">Mitochondrion</keyword>
<keyword id="KW-0539">Nucleus</keyword>
<keyword id="KW-0648">Protein biosynthesis</keyword>
<keyword id="KW-1267">Proteomics identification</keyword>
<keyword id="KW-1185">Reference proteome</keyword>
<keyword id="KW-0694">RNA-binding</keyword>
<keyword id="KW-0809">Transit peptide</keyword>
<evidence type="ECO:0000255" key="1"/>
<evidence type="ECO:0000256" key="2">
    <source>
        <dbReference type="SAM" id="MobiDB-lite"/>
    </source>
</evidence>
<evidence type="ECO:0000269" key="3">
    <source>
    </source>
</evidence>
<evidence type="ECO:0000269" key="4">
    <source>
    </source>
</evidence>
<evidence type="ECO:0000269" key="5">
    <source>
    </source>
</evidence>
<evidence type="ECO:0000269" key="6">
    <source>
    </source>
</evidence>
<evidence type="ECO:0000269" key="7">
    <source>
    </source>
</evidence>
<evidence type="ECO:0000303" key="8">
    <source>
    </source>
</evidence>
<evidence type="ECO:0000303" key="9">
    <source>
    </source>
</evidence>
<evidence type="ECO:0000303" key="10">
    <source>
    </source>
</evidence>
<evidence type="ECO:0000303" key="11">
    <source>
    </source>
</evidence>
<evidence type="ECO:0000305" key="12"/>
<evidence type="ECO:0000312" key="13">
    <source>
        <dbReference type="HGNC" id="HGNC:30972"/>
    </source>
</evidence>
<evidence type="ECO:0007744" key="14">
    <source>
        <dbReference type="PDB" id="7ZJW"/>
    </source>
</evidence>
<evidence type="ECO:0007744" key="15">
    <source>
        <dbReference type="PDB" id="7ZJX"/>
    </source>
</evidence>
<reference key="1">
    <citation type="journal article" date="2002" name="Gene">
        <title>cDNA cloning, expression pattern and RNA binding analysis of human selenocysteine insertion sequence (SECIS) binding protein 2.</title>
        <authorList>
            <person name="Lescure A."/>
            <person name="Allmang C."/>
            <person name="Yamada K."/>
            <person name="Carbon P."/>
            <person name="Krol A."/>
        </authorList>
    </citation>
    <scope>NUCLEOTIDE SEQUENCE [MRNA] (ISOFORM 1)</scope>
    <scope>TISSUE SPECIFICITY</scope>
</reference>
<reference key="2">
    <citation type="journal article" date="2001" name="Genome Res.">
        <title>Towards a catalog of human genes and proteins: sequencing and analysis of 500 novel complete protein coding human cDNAs.</title>
        <authorList>
            <person name="Wiemann S."/>
            <person name="Weil B."/>
            <person name="Wellenreuther R."/>
            <person name="Gassenhuber J."/>
            <person name="Glassl S."/>
            <person name="Ansorge W."/>
            <person name="Boecher M."/>
            <person name="Bloecker H."/>
            <person name="Bauersachs S."/>
            <person name="Blum H."/>
            <person name="Lauber J."/>
            <person name="Duesterhoeft A."/>
            <person name="Beyer A."/>
            <person name="Koehrer K."/>
            <person name="Strack N."/>
            <person name="Mewes H.-W."/>
            <person name="Ottenwaelder B."/>
            <person name="Obermaier B."/>
            <person name="Tampe J."/>
            <person name="Heubner D."/>
            <person name="Wambutt R."/>
            <person name="Korn B."/>
            <person name="Klein M."/>
            <person name="Poustka A."/>
        </authorList>
    </citation>
    <scope>NUCLEOTIDE SEQUENCE [LARGE SCALE MRNA] (ISOFORM 2)</scope>
    <source>
        <tissue>Testis</tissue>
    </source>
</reference>
<reference key="3">
    <citation type="journal article" date="2004" name="Nat. Genet.">
        <title>Complete sequencing and characterization of 21,243 full-length human cDNAs.</title>
        <authorList>
            <person name="Ota T."/>
            <person name="Suzuki Y."/>
            <person name="Nishikawa T."/>
            <person name="Otsuki T."/>
            <person name="Sugiyama T."/>
            <person name="Irie R."/>
            <person name="Wakamatsu A."/>
            <person name="Hayashi K."/>
            <person name="Sato H."/>
            <person name="Nagai K."/>
            <person name="Kimura K."/>
            <person name="Makita H."/>
            <person name="Sekine M."/>
            <person name="Obayashi M."/>
            <person name="Nishi T."/>
            <person name="Shibahara T."/>
            <person name="Tanaka T."/>
            <person name="Ishii S."/>
            <person name="Yamamoto J."/>
            <person name="Saito K."/>
            <person name="Kawai Y."/>
            <person name="Isono Y."/>
            <person name="Nakamura Y."/>
            <person name="Nagahari K."/>
            <person name="Murakami K."/>
            <person name="Yasuda T."/>
            <person name="Iwayanagi T."/>
            <person name="Wagatsuma M."/>
            <person name="Shiratori A."/>
            <person name="Sudo H."/>
            <person name="Hosoiri T."/>
            <person name="Kaku Y."/>
            <person name="Kodaira H."/>
            <person name="Kondo H."/>
            <person name="Sugawara M."/>
            <person name="Takahashi M."/>
            <person name="Kanda K."/>
            <person name="Yokoi T."/>
            <person name="Furuya T."/>
            <person name="Kikkawa E."/>
            <person name="Omura Y."/>
            <person name="Abe K."/>
            <person name="Kamihara K."/>
            <person name="Katsuta N."/>
            <person name="Sato K."/>
            <person name="Tanikawa M."/>
            <person name="Yamazaki M."/>
            <person name="Ninomiya K."/>
            <person name="Ishibashi T."/>
            <person name="Yamashita H."/>
            <person name="Murakawa K."/>
            <person name="Fujimori K."/>
            <person name="Tanai H."/>
            <person name="Kimata M."/>
            <person name="Watanabe M."/>
            <person name="Hiraoka S."/>
            <person name="Chiba Y."/>
            <person name="Ishida S."/>
            <person name="Ono Y."/>
            <person name="Takiguchi S."/>
            <person name="Watanabe S."/>
            <person name="Yosida M."/>
            <person name="Hotuta T."/>
            <person name="Kusano J."/>
            <person name="Kanehori K."/>
            <person name="Takahashi-Fujii A."/>
            <person name="Hara H."/>
            <person name="Tanase T.-O."/>
            <person name="Nomura Y."/>
            <person name="Togiya S."/>
            <person name="Komai F."/>
            <person name="Hara R."/>
            <person name="Takeuchi K."/>
            <person name="Arita M."/>
            <person name="Imose N."/>
            <person name="Musashino K."/>
            <person name="Yuuki H."/>
            <person name="Oshima A."/>
            <person name="Sasaki N."/>
            <person name="Aotsuka S."/>
            <person name="Yoshikawa Y."/>
            <person name="Matsunawa H."/>
            <person name="Ichihara T."/>
            <person name="Shiohata N."/>
            <person name="Sano S."/>
            <person name="Moriya S."/>
            <person name="Momiyama H."/>
            <person name="Satoh N."/>
            <person name="Takami S."/>
            <person name="Terashima Y."/>
            <person name="Suzuki O."/>
            <person name="Nakagawa S."/>
            <person name="Senoh A."/>
            <person name="Mizoguchi H."/>
            <person name="Goto Y."/>
            <person name="Shimizu F."/>
            <person name="Wakebe H."/>
            <person name="Hishigaki H."/>
            <person name="Watanabe T."/>
            <person name="Sugiyama A."/>
            <person name="Takemoto M."/>
            <person name="Kawakami B."/>
            <person name="Yamazaki M."/>
            <person name="Watanabe K."/>
            <person name="Kumagai A."/>
            <person name="Itakura S."/>
            <person name="Fukuzumi Y."/>
            <person name="Fujimori Y."/>
            <person name="Komiyama M."/>
            <person name="Tashiro H."/>
            <person name="Tanigami A."/>
            <person name="Fujiwara T."/>
            <person name="Ono T."/>
            <person name="Yamada K."/>
            <person name="Fujii Y."/>
            <person name="Ozaki K."/>
            <person name="Hirao M."/>
            <person name="Ohmori Y."/>
            <person name="Kawabata A."/>
            <person name="Hikiji T."/>
            <person name="Kobatake N."/>
            <person name="Inagaki H."/>
            <person name="Ikema Y."/>
            <person name="Okamoto S."/>
            <person name="Okitani R."/>
            <person name="Kawakami T."/>
            <person name="Noguchi S."/>
            <person name="Itoh T."/>
            <person name="Shigeta K."/>
            <person name="Senba T."/>
            <person name="Matsumura K."/>
            <person name="Nakajima Y."/>
            <person name="Mizuno T."/>
            <person name="Morinaga M."/>
            <person name="Sasaki M."/>
            <person name="Togashi T."/>
            <person name="Oyama M."/>
            <person name="Hata H."/>
            <person name="Watanabe M."/>
            <person name="Komatsu T."/>
            <person name="Mizushima-Sugano J."/>
            <person name="Satoh T."/>
            <person name="Shirai Y."/>
            <person name="Takahashi Y."/>
            <person name="Nakagawa K."/>
            <person name="Okumura K."/>
            <person name="Nagase T."/>
            <person name="Nomura N."/>
            <person name="Kikuchi H."/>
            <person name="Masuho Y."/>
            <person name="Yamashita R."/>
            <person name="Nakai K."/>
            <person name="Yada T."/>
            <person name="Nakamura Y."/>
            <person name="Ohara O."/>
            <person name="Isogai T."/>
            <person name="Sugano S."/>
        </authorList>
    </citation>
    <scope>NUCLEOTIDE SEQUENCE [LARGE SCALE MRNA] (ISOFORM 2)</scope>
    <source>
        <tissue>Thalamus</tissue>
    </source>
</reference>
<reference key="4">
    <citation type="journal article" date="2004" name="Nature">
        <title>DNA sequence and analysis of human chromosome 9.</title>
        <authorList>
            <person name="Humphray S.J."/>
            <person name="Oliver K."/>
            <person name="Hunt A.R."/>
            <person name="Plumb R.W."/>
            <person name="Loveland J.E."/>
            <person name="Howe K.L."/>
            <person name="Andrews T.D."/>
            <person name="Searle S."/>
            <person name="Hunt S.E."/>
            <person name="Scott C.E."/>
            <person name="Jones M.C."/>
            <person name="Ainscough R."/>
            <person name="Almeida J.P."/>
            <person name="Ambrose K.D."/>
            <person name="Ashwell R.I.S."/>
            <person name="Babbage A.K."/>
            <person name="Babbage S."/>
            <person name="Bagguley C.L."/>
            <person name="Bailey J."/>
            <person name="Banerjee R."/>
            <person name="Barker D.J."/>
            <person name="Barlow K.F."/>
            <person name="Bates K."/>
            <person name="Beasley H."/>
            <person name="Beasley O."/>
            <person name="Bird C.P."/>
            <person name="Bray-Allen S."/>
            <person name="Brown A.J."/>
            <person name="Brown J.Y."/>
            <person name="Burford D."/>
            <person name="Burrill W."/>
            <person name="Burton J."/>
            <person name="Carder C."/>
            <person name="Carter N.P."/>
            <person name="Chapman J.C."/>
            <person name="Chen Y."/>
            <person name="Clarke G."/>
            <person name="Clark S.Y."/>
            <person name="Clee C.M."/>
            <person name="Clegg S."/>
            <person name="Collier R.E."/>
            <person name="Corby N."/>
            <person name="Crosier M."/>
            <person name="Cummings A.T."/>
            <person name="Davies J."/>
            <person name="Dhami P."/>
            <person name="Dunn M."/>
            <person name="Dutta I."/>
            <person name="Dyer L.W."/>
            <person name="Earthrowl M.E."/>
            <person name="Faulkner L."/>
            <person name="Fleming C.J."/>
            <person name="Frankish A."/>
            <person name="Frankland J.A."/>
            <person name="French L."/>
            <person name="Fricker D.G."/>
            <person name="Garner P."/>
            <person name="Garnett J."/>
            <person name="Ghori J."/>
            <person name="Gilbert J.G.R."/>
            <person name="Glison C."/>
            <person name="Grafham D.V."/>
            <person name="Gribble S."/>
            <person name="Griffiths C."/>
            <person name="Griffiths-Jones S."/>
            <person name="Grocock R."/>
            <person name="Guy J."/>
            <person name="Hall R.E."/>
            <person name="Hammond S."/>
            <person name="Harley J.L."/>
            <person name="Harrison E.S.I."/>
            <person name="Hart E.A."/>
            <person name="Heath P.D."/>
            <person name="Henderson C.D."/>
            <person name="Hopkins B.L."/>
            <person name="Howard P.J."/>
            <person name="Howden P.J."/>
            <person name="Huckle E."/>
            <person name="Johnson C."/>
            <person name="Johnson D."/>
            <person name="Joy A.A."/>
            <person name="Kay M."/>
            <person name="Keenan S."/>
            <person name="Kershaw J.K."/>
            <person name="Kimberley A.M."/>
            <person name="King A."/>
            <person name="Knights A."/>
            <person name="Laird G.K."/>
            <person name="Langford C."/>
            <person name="Lawlor S."/>
            <person name="Leongamornlert D.A."/>
            <person name="Leversha M."/>
            <person name="Lloyd C."/>
            <person name="Lloyd D.M."/>
            <person name="Lovell J."/>
            <person name="Martin S."/>
            <person name="Mashreghi-Mohammadi M."/>
            <person name="Matthews L."/>
            <person name="McLaren S."/>
            <person name="McLay K.E."/>
            <person name="McMurray A."/>
            <person name="Milne S."/>
            <person name="Nickerson T."/>
            <person name="Nisbett J."/>
            <person name="Nordsiek G."/>
            <person name="Pearce A.V."/>
            <person name="Peck A.I."/>
            <person name="Porter K.M."/>
            <person name="Pandian R."/>
            <person name="Pelan S."/>
            <person name="Phillimore B."/>
            <person name="Povey S."/>
            <person name="Ramsey Y."/>
            <person name="Rand V."/>
            <person name="Scharfe M."/>
            <person name="Sehra H.K."/>
            <person name="Shownkeen R."/>
            <person name="Sims S.K."/>
            <person name="Skuce C.D."/>
            <person name="Smith M."/>
            <person name="Steward C.A."/>
            <person name="Swarbreck D."/>
            <person name="Sycamore N."/>
            <person name="Tester J."/>
            <person name="Thorpe A."/>
            <person name="Tracey A."/>
            <person name="Tromans A."/>
            <person name="Thomas D.W."/>
            <person name="Wall M."/>
            <person name="Wallis J.M."/>
            <person name="West A.P."/>
            <person name="Whitehead S.L."/>
            <person name="Willey D.L."/>
            <person name="Williams S.A."/>
            <person name="Wilming L."/>
            <person name="Wray P.W."/>
            <person name="Young L."/>
            <person name="Ashurst J.L."/>
            <person name="Coulson A."/>
            <person name="Blocker H."/>
            <person name="Durbin R.M."/>
            <person name="Sulston J.E."/>
            <person name="Hubbard T."/>
            <person name="Jackson M.J."/>
            <person name="Bentley D.R."/>
            <person name="Beck S."/>
            <person name="Rogers J."/>
            <person name="Dunham I."/>
        </authorList>
    </citation>
    <scope>NUCLEOTIDE SEQUENCE [LARGE SCALE GENOMIC DNA]</scope>
</reference>
<reference key="5">
    <citation type="submission" date="2005-07" db="EMBL/GenBank/DDBJ databases">
        <authorList>
            <person name="Mural R.J."/>
            <person name="Istrail S."/>
            <person name="Sutton G.G."/>
            <person name="Florea L."/>
            <person name="Halpern A.L."/>
            <person name="Mobarry C.M."/>
            <person name="Lippert R."/>
            <person name="Walenz B."/>
            <person name="Shatkay H."/>
            <person name="Dew I."/>
            <person name="Miller J.R."/>
            <person name="Flanigan M.J."/>
            <person name="Edwards N.J."/>
            <person name="Bolanos R."/>
            <person name="Fasulo D."/>
            <person name="Halldorsson B.V."/>
            <person name="Hannenhalli S."/>
            <person name="Turner R."/>
            <person name="Yooseph S."/>
            <person name="Lu F."/>
            <person name="Nusskern D.R."/>
            <person name="Shue B.C."/>
            <person name="Zheng X.H."/>
            <person name="Zhong F."/>
            <person name="Delcher A.L."/>
            <person name="Huson D.H."/>
            <person name="Kravitz S.A."/>
            <person name="Mouchard L."/>
            <person name="Reinert K."/>
            <person name="Remington K.A."/>
            <person name="Clark A.G."/>
            <person name="Waterman M.S."/>
            <person name="Eichler E.E."/>
            <person name="Adams M.D."/>
            <person name="Hunkapiller M.W."/>
            <person name="Myers E.W."/>
            <person name="Venter J.C."/>
        </authorList>
    </citation>
    <scope>NUCLEOTIDE SEQUENCE [LARGE SCALE GENOMIC DNA]</scope>
</reference>
<reference key="6">
    <citation type="journal article" date="2004" name="Genome Res.">
        <title>The status, quality, and expansion of the NIH full-length cDNA project: the Mammalian Gene Collection (MGC).</title>
        <authorList>
            <consortium name="The MGC Project Team"/>
        </authorList>
    </citation>
    <scope>NUCLEOTIDE SEQUENCE [LARGE SCALE MRNA] (ISOFORM 1)</scope>
    <source>
        <tissue>Testis</tissue>
    </source>
</reference>
<reference key="7">
    <citation type="journal article" date="2008" name="Nucleic Acids Res.">
        <title>Functional characterization of alternatively spliced human SECISBP2 transcript variants.</title>
        <authorList>
            <person name="Papp L.V."/>
            <person name="Wang J."/>
            <person name="Kennedy D."/>
            <person name="Boucher D."/>
            <person name="Zhang Y."/>
            <person name="Gladyshev V.N."/>
            <person name="Singh R.N."/>
            <person name="Khanna K.K."/>
        </authorList>
    </citation>
    <scope>SUBCELLULAR LOCATION (ISOFORM 2)</scope>
    <scope>ALTERNATIVE SPLICING (ISOFORMS 1; 2 AND 3)</scope>
</reference>
<reference evidence="14 15" key="8">
    <citation type="journal article" date="2022" name="Science">
        <title>Structure of the mammalian ribosome as it decodes the selenocysteine UGA codon.</title>
        <authorList>
            <person name="Hilal T."/>
            <person name="Killam B.Y."/>
            <person name="Grozdanovic M."/>
            <person name="Dobosz-Bartoszek M."/>
            <person name="Loerke J."/>
            <person name="Buerger J."/>
            <person name="Mielke T."/>
            <person name="Copeland P.R."/>
            <person name="Simonovic M."/>
            <person name="Spahn C.M.T."/>
        </authorList>
    </citation>
    <scope>STRUCTURE BY ELECTRON MICROSCOPY (2.80 ANGSTROMS) IN COMPLEX WITH EEFSEC AND RIBOSOME</scope>
    <scope>FUNCTION</scope>
</reference>
<reference key="9">
    <citation type="journal article" date="2005" name="Nat. Genet.">
        <title>Mutations in SECISBP2 result in abnormal thyroid hormone metabolism.</title>
        <authorList>
            <person name="Dumitrescu A.M."/>
            <person name="Liao X.-H."/>
            <person name="Abdullah M.S.Y."/>
            <person name="Lado-Abeal J."/>
            <person name="Majed F.A."/>
            <person name="Moeller L.C."/>
            <person name="Boran G."/>
            <person name="Schomburg L."/>
            <person name="Weiss R.E."/>
            <person name="Refetoff S."/>
        </authorList>
    </citation>
    <scope>INVOLVEMENT IN THMA1</scope>
    <scope>VARIANT THMA1 GLN-540</scope>
</reference>
<reference key="10">
    <citation type="journal article" date="2018" name="Thyroid">
        <title>A Novel Homozygous Selenocysteine Insertion Sequence Binding Protein 2 (SECISBP2, SBP2) Gene Mutation in a Turkish Boy.</title>
        <authorList>
            <person name="Catli G."/>
            <person name="Fujisawa H."/>
            <person name="Kirbiyik O."/>
            <person name="Mimoto M.S."/>
            <person name="Gencpinar P."/>
            <person name="Oezdemir T.R."/>
            <person name="Duendar B.N."/>
            <person name="Dumitrescu A.M."/>
        </authorList>
    </citation>
    <scope>INVOLVEMENT IN THMA1</scope>
</reference>
<gene>
    <name evidence="10 13" type="primary">SECISBP2</name>
    <name evidence="11" type="synonym">SBP2</name>
</gene>
<name>SEBP2_HUMAN</name>
<feature type="chain" id="PRO_0000097655" description="Selenocysteine insertion sequence-binding protein 2">
    <location>
        <begin position="1"/>
        <end position="854"/>
    </location>
</feature>
<feature type="region of interest" description="Disordered" evidence="2">
    <location>
        <begin position="332"/>
        <end position="351"/>
    </location>
</feature>
<feature type="region of interest" description="Disordered" evidence="2">
    <location>
        <begin position="356"/>
        <end position="394"/>
    </location>
</feature>
<feature type="region of interest" description="Disordered" evidence="2">
    <location>
        <begin position="417"/>
        <end position="445"/>
    </location>
</feature>
<feature type="region of interest" description="Disordered" evidence="2">
    <location>
        <begin position="488"/>
        <end position="619"/>
    </location>
</feature>
<feature type="region of interest" description="RNA-binding" evidence="1">
    <location>
        <begin position="673"/>
        <end position="694"/>
    </location>
</feature>
<feature type="region of interest" description="Disordered" evidence="2">
    <location>
        <begin position="787"/>
        <end position="812"/>
    </location>
</feature>
<feature type="short sequence motif" description="Nuclear localization signal" evidence="1">
    <location>
        <begin position="380"/>
        <end position="387"/>
    </location>
</feature>
<feature type="compositionally biased region" description="Polar residues" evidence="2">
    <location>
        <begin position="338"/>
        <end position="350"/>
    </location>
</feature>
<feature type="compositionally biased region" description="Polar residues" evidence="2">
    <location>
        <begin position="361"/>
        <end position="372"/>
    </location>
</feature>
<feature type="compositionally biased region" description="Polar residues" evidence="2">
    <location>
        <begin position="426"/>
        <end position="445"/>
    </location>
</feature>
<feature type="compositionally biased region" description="Basic and acidic residues" evidence="2">
    <location>
        <begin position="536"/>
        <end position="547"/>
    </location>
</feature>
<feature type="compositionally biased region" description="Polar residues" evidence="2">
    <location>
        <begin position="548"/>
        <end position="559"/>
    </location>
</feature>
<feature type="compositionally biased region" description="Acidic residues" evidence="2">
    <location>
        <begin position="560"/>
        <end position="572"/>
    </location>
</feature>
<feature type="compositionally biased region" description="Basic and acidic residues" evidence="2">
    <location>
        <begin position="593"/>
        <end position="611"/>
    </location>
</feature>
<feature type="splice variant" id="VSP_039070" description="In isoform 2." evidence="8 9">
    <location>
        <begin position="1"/>
        <end position="73"/>
    </location>
</feature>
<feature type="splice variant" id="VSP_055755" description="In isoform 3." evidence="12">
    <location>
        <begin position="1"/>
        <end position="68"/>
    </location>
</feature>
<feature type="splice variant" id="VSP_039071" description="In isoform 2." evidence="8 9">
    <original>STFPPQYLSSEITLHPYAYSPYTLDSTQ</original>
    <variation>MVRVLRSMCLPQLCSHILSVCSGTTSDR</variation>
    <location>
        <begin position="74"/>
        <end position="101"/>
    </location>
</feature>
<feature type="sequence variant" id="VAR_061704" description="In dbSNP:rs45452691.">
    <original>Q</original>
    <variation>E</variation>
    <location>
        <position position="428"/>
    </location>
</feature>
<feature type="sequence variant" id="VAR_025282" description="In THMA1; dbSNP:rs119461976." evidence="4">
    <original>R</original>
    <variation>Q</variation>
    <location>
        <position position="540"/>
    </location>
</feature>
<feature type="sequence conflict" description="In Ref. 6; AAH36109." evidence="12" ref="6">
    <original>S</original>
    <variation>G</variation>
    <location>
        <position position="553"/>
    </location>
</feature>
<feature type="sequence conflict" description="In Ref. 1; AAK57518." evidence="12" ref="1">
    <original>P</original>
    <variation>L</variation>
    <location>
        <position position="797"/>
    </location>
</feature>
<protein>
    <recommendedName>
        <fullName evidence="10">Selenocysteine insertion sequence-binding protein 2</fullName>
        <shortName evidence="10">SECIS-binding protein 2</shortName>
    </recommendedName>
</protein>
<dbReference type="EMBL" id="AF380995">
    <property type="protein sequence ID" value="AAK57518.1"/>
    <property type="molecule type" value="mRNA"/>
</dbReference>
<dbReference type="EMBL" id="AL136881">
    <property type="protein sequence ID" value="CAB66815.1"/>
    <property type="molecule type" value="mRNA"/>
</dbReference>
<dbReference type="EMBL" id="AK290182">
    <property type="protein sequence ID" value="BAF82871.1"/>
    <property type="molecule type" value="mRNA"/>
</dbReference>
<dbReference type="EMBL" id="BX000356">
    <property type="status" value="NOT_ANNOTATED_CDS"/>
    <property type="molecule type" value="Genomic_DNA"/>
</dbReference>
<dbReference type="EMBL" id="AL160054">
    <property type="status" value="NOT_ANNOTATED_CDS"/>
    <property type="molecule type" value="Genomic_DNA"/>
</dbReference>
<dbReference type="EMBL" id="AL929575">
    <property type="status" value="NOT_ANNOTATED_CDS"/>
    <property type="molecule type" value="Genomic_DNA"/>
</dbReference>
<dbReference type="EMBL" id="CH471089">
    <property type="protein sequence ID" value="EAW62763.1"/>
    <property type="molecule type" value="Genomic_DNA"/>
</dbReference>
<dbReference type="EMBL" id="CH471089">
    <property type="protein sequence ID" value="EAW62764.1"/>
    <property type="molecule type" value="Genomic_DNA"/>
</dbReference>
<dbReference type="EMBL" id="BC023142">
    <property type="protein sequence ID" value="AAH23142.2"/>
    <property type="molecule type" value="mRNA"/>
</dbReference>
<dbReference type="EMBL" id="BC036109">
    <property type="protein sequence ID" value="AAH36109.1"/>
    <property type="molecule type" value="mRNA"/>
</dbReference>
<dbReference type="CCDS" id="CCDS65076.1">
    <molecule id="Q96T21-2"/>
</dbReference>
<dbReference type="CCDS" id="CCDS65077.1">
    <molecule id="Q96T21-3"/>
</dbReference>
<dbReference type="CCDS" id="CCDS6683.1">
    <molecule id="Q96T21-1"/>
</dbReference>
<dbReference type="RefSeq" id="NP_001269617.1">
    <property type="nucleotide sequence ID" value="NM_001282688.1"/>
</dbReference>
<dbReference type="RefSeq" id="NP_001269618.1">
    <molecule id="Q96T21-2"/>
    <property type="nucleotide sequence ID" value="NM_001282689.2"/>
</dbReference>
<dbReference type="RefSeq" id="NP_001269619.1">
    <molecule id="Q96T21-3"/>
    <property type="nucleotide sequence ID" value="NM_001282690.1"/>
</dbReference>
<dbReference type="RefSeq" id="NP_076982.3">
    <molecule id="Q96T21-1"/>
    <property type="nucleotide sequence ID" value="NM_024077.4"/>
</dbReference>
<dbReference type="RefSeq" id="XP_006717345.1">
    <property type="nucleotide sequence ID" value="XM_006717282.2"/>
</dbReference>
<dbReference type="RefSeq" id="XP_011517302.1">
    <molecule id="Q96T21-3"/>
    <property type="nucleotide sequence ID" value="XM_011519000.3"/>
</dbReference>
<dbReference type="RefSeq" id="XP_047279810.1">
    <molecule id="Q96T21-3"/>
    <property type="nucleotide sequence ID" value="XM_047423854.1"/>
</dbReference>
<dbReference type="RefSeq" id="XP_047279812.1">
    <molecule id="Q96T21-1"/>
    <property type="nucleotide sequence ID" value="XM_047423856.1"/>
</dbReference>
<dbReference type="RefSeq" id="XP_047279813.1">
    <molecule id="Q96T21-1"/>
    <property type="nucleotide sequence ID" value="XM_047423857.1"/>
</dbReference>
<dbReference type="RefSeq" id="XP_054219744.1">
    <molecule id="Q96T21-3"/>
    <property type="nucleotide sequence ID" value="XM_054363769.1"/>
</dbReference>
<dbReference type="RefSeq" id="XP_054219745.1">
    <molecule id="Q96T21-3"/>
    <property type="nucleotide sequence ID" value="XM_054363770.1"/>
</dbReference>
<dbReference type="RefSeq" id="XP_054219750.1">
    <molecule id="Q96T21-1"/>
    <property type="nucleotide sequence ID" value="XM_054363775.1"/>
</dbReference>
<dbReference type="RefSeq" id="XP_054219751.1">
    <molecule id="Q96T21-1"/>
    <property type="nucleotide sequence ID" value="XM_054363776.1"/>
</dbReference>
<dbReference type="PDB" id="7ZJW">
    <property type="method" value="EM"/>
    <property type="resolution" value="2.80 A"/>
    <property type="chains" value="B=1-854"/>
</dbReference>
<dbReference type="PDB" id="7ZJX">
    <property type="method" value="EM"/>
    <property type="resolution" value="3.10 A"/>
    <property type="chains" value="B=1-854"/>
</dbReference>
<dbReference type="PDBsum" id="7ZJW"/>
<dbReference type="PDBsum" id="7ZJX"/>
<dbReference type="EMDB" id="EMD-14751"/>
<dbReference type="EMDB" id="EMD-14752"/>
<dbReference type="SMR" id="Q96T21"/>
<dbReference type="BioGRID" id="122507">
    <property type="interactions" value="89"/>
</dbReference>
<dbReference type="FunCoup" id="Q96T21">
    <property type="interactions" value="1569"/>
</dbReference>
<dbReference type="IntAct" id="Q96T21">
    <property type="interactions" value="28"/>
</dbReference>
<dbReference type="MINT" id="Q96T21"/>
<dbReference type="STRING" id="9606.ENSP00000364965"/>
<dbReference type="GlyCosmos" id="Q96T21">
    <property type="glycosylation" value="1 site, 1 glycan"/>
</dbReference>
<dbReference type="GlyGen" id="Q96T21">
    <property type="glycosylation" value="1 site, 1 O-linked glycan (1 site)"/>
</dbReference>
<dbReference type="iPTMnet" id="Q96T21"/>
<dbReference type="PhosphoSitePlus" id="Q96T21"/>
<dbReference type="BioMuta" id="SECISBP2"/>
<dbReference type="DMDM" id="52788293"/>
<dbReference type="jPOST" id="Q96T21"/>
<dbReference type="MassIVE" id="Q96T21"/>
<dbReference type="PaxDb" id="9606-ENSP00000364965"/>
<dbReference type="PeptideAtlas" id="Q96T21"/>
<dbReference type="ProteomicsDB" id="30103"/>
<dbReference type="ProteomicsDB" id="78173">
    <molecule id="Q96T21-1"/>
</dbReference>
<dbReference type="ProteomicsDB" id="78174">
    <molecule id="Q96T21-2"/>
</dbReference>
<dbReference type="Pumba" id="Q96T21"/>
<dbReference type="Antibodypedia" id="27996">
    <property type="antibodies" value="202 antibodies from 31 providers"/>
</dbReference>
<dbReference type="DNASU" id="79048"/>
<dbReference type="Ensembl" id="ENST00000339901.8">
    <molecule id="Q96T21-2"/>
    <property type="protein sequence ID" value="ENSP00000364959.3"/>
    <property type="gene ID" value="ENSG00000187742.15"/>
</dbReference>
<dbReference type="Ensembl" id="ENST00000375807.8">
    <molecule id="Q96T21-1"/>
    <property type="protein sequence ID" value="ENSP00000364965.3"/>
    <property type="gene ID" value="ENSG00000187742.15"/>
</dbReference>
<dbReference type="Ensembl" id="ENST00000534113.6">
    <molecule id="Q96T21-3"/>
    <property type="protein sequence ID" value="ENSP00000436650.2"/>
    <property type="gene ID" value="ENSG00000187742.15"/>
</dbReference>
<dbReference type="GeneID" id="79048"/>
<dbReference type="KEGG" id="hsa:79048"/>
<dbReference type="MANE-Select" id="ENST00000375807.8">
    <property type="protein sequence ID" value="ENSP00000364965.3"/>
    <property type="RefSeq nucleotide sequence ID" value="NM_024077.5"/>
    <property type="RefSeq protein sequence ID" value="NP_076982.3"/>
</dbReference>
<dbReference type="UCSC" id="uc004aqj.3">
    <molecule id="Q96T21-1"/>
    <property type="organism name" value="human"/>
</dbReference>
<dbReference type="AGR" id="HGNC:30972"/>
<dbReference type="CTD" id="79048"/>
<dbReference type="DisGeNET" id="79048"/>
<dbReference type="GeneCards" id="SECISBP2"/>
<dbReference type="HGNC" id="HGNC:30972">
    <property type="gene designation" value="SECISBP2"/>
</dbReference>
<dbReference type="HPA" id="ENSG00000187742">
    <property type="expression patterns" value="Low tissue specificity"/>
</dbReference>
<dbReference type="MalaCards" id="SECISBP2"/>
<dbReference type="MIM" id="607693">
    <property type="type" value="gene"/>
</dbReference>
<dbReference type="MIM" id="609698">
    <property type="type" value="phenotype"/>
</dbReference>
<dbReference type="neXtProt" id="NX_Q96T21"/>
<dbReference type="OpenTargets" id="ENSG00000187742"/>
<dbReference type="Orphanet" id="171706">
    <property type="disease" value="Short stature-delayed bone age due to thyroid hormone metabolism deficiency"/>
</dbReference>
<dbReference type="PharmGKB" id="PA134863749"/>
<dbReference type="VEuPathDB" id="HostDB:ENSG00000187742"/>
<dbReference type="eggNOG" id="ENOG502QUP4">
    <property type="taxonomic scope" value="Eukaryota"/>
</dbReference>
<dbReference type="GeneTree" id="ENSGT00490000043356"/>
<dbReference type="HOGENOM" id="CLU_016771_0_0_1"/>
<dbReference type="InParanoid" id="Q96T21"/>
<dbReference type="OMA" id="CVFPSCA"/>
<dbReference type="OrthoDB" id="263617at2759"/>
<dbReference type="PAN-GO" id="Q96T21">
    <property type="GO annotations" value="5 GO annotations based on evolutionary models"/>
</dbReference>
<dbReference type="PhylomeDB" id="Q96T21"/>
<dbReference type="TreeFam" id="TF328821"/>
<dbReference type="PathwayCommons" id="Q96T21"/>
<dbReference type="Reactome" id="R-HSA-2408557">
    <property type="pathway name" value="Selenocysteine synthesis"/>
</dbReference>
<dbReference type="SignaLink" id="Q96T21"/>
<dbReference type="BioGRID-ORCS" id="79048">
    <property type="hits" value="30 hits in 1160 CRISPR screens"/>
</dbReference>
<dbReference type="CD-CODE" id="232F8A39">
    <property type="entry name" value="P-body"/>
</dbReference>
<dbReference type="CD-CODE" id="DEE660B4">
    <property type="entry name" value="Stress granule"/>
</dbReference>
<dbReference type="ChiTaRS" id="SECISBP2">
    <property type="organism name" value="human"/>
</dbReference>
<dbReference type="GeneWiki" id="SECISBP2"/>
<dbReference type="GenomeRNAi" id="79048"/>
<dbReference type="Pharos" id="Q96T21">
    <property type="development level" value="Tbio"/>
</dbReference>
<dbReference type="PRO" id="PR:Q96T21"/>
<dbReference type="Proteomes" id="UP000005640">
    <property type="component" value="Chromosome 9"/>
</dbReference>
<dbReference type="RNAct" id="Q96T21">
    <property type="molecule type" value="protein"/>
</dbReference>
<dbReference type="Bgee" id="ENSG00000187742">
    <property type="expression patterns" value="Expressed in secondary oocyte and 196 other cell types or tissues"/>
</dbReference>
<dbReference type="ExpressionAtlas" id="Q96T21">
    <property type="expression patterns" value="baseline and differential"/>
</dbReference>
<dbReference type="GO" id="GO:0005739">
    <property type="term" value="C:mitochondrion"/>
    <property type="evidence" value="ECO:0000318"/>
    <property type="project" value="GO_Central"/>
</dbReference>
<dbReference type="GO" id="GO:0005654">
    <property type="term" value="C:nucleoplasm"/>
    <property type="evidence" value="ECO:0000314"/>
    <property type="project" value="HPA"/>
</dbReference>
<dbReference type="GO" id="GO:1990904">
    <property type="term" value="C:ribonucleoprotein complex"/>
    <property type="evidence" value="ECO:0000318"/>
    <property type="project" value="GO_Central"/>
</dbReference>
<dbReference type="GO" id="GO:0003677">
    <property type="term" value="F:DNA binding"/>
    <property type="evidence" value="ECO:0000269"/>
    <property type="project" value="DisProt"/>
</dbReference>
<dbReference type="GO" id="GO:0003730">
    <property type="term" value="F:mRNA 3'-UTR binding"/>
    <property type="evidence" value="ECO:0000314"/>
    <property type="project" value="UniProtKB"/>
</dbReference>
<dbReference type="GO" id="GO:0043021">
    <property type="term" value="F:ribonucleoprotein complex binding"/>
    <property type="evidence" value="ECO:0000318"/>
    <property type="project" value="GO_Central"/>
</dbReference>
<dbReference type="GO" id="GO:0003723">
    <property type="term" value="F:RNA binding"/>
    <property type="evidence" value="ECO:0007005"/>
    <property type="project" value="UniProtKB"/>
</dbReference>
<dbReference type="GO" id="GO:0035368">
    <property type="term" value="F:selenocysteine insertion sequence binding"/>
    <property type="evidence" value="ECO:0000314"/>
    <property type="project" value="UniProtKB"/>
</dbReference>
<dbReference type="GO" id="GO:0021884">
    <property type="term" value="P:forebrain neuron development"/>
    <property type="evidence" value="ECO:0007669"/>
    <property type="project" value="Ensembl"/>
</dbReference>
<dbReference type="GO" id="GO:0048255">
    <property type="term" value="P:mRNA stabilization"/>
    <property type="evidence" value="ECO:0007669"/>
    <property type="project" value="Ensembl"/>
</dbReference>
<dbReference type="GO" id="GO:2000623">
    <property type="term" value="P:negative regulation of nuclear-transcribed mRNA catabolic process, nonsense-mediated decay"/>
    <property type="evidence" value="ECO:0007669"/>
    <property type="project" value="Ensembl"/>
</dbReference>
<dbReference type="GO" id="GO:0006401">
    <property type="term" value="P:RNA catabolic process"/>
    <property type="evidence" value="ECO:0007669"/>
    <property type="project" value="Ensembl"/>
</dbReference>
<dbReference type="GO" id="GO:0001514">
    <property type="term" value="P:selenocysteine incorporation"/>
    <property type="evidence" value="ECO:0000314"/>
    <property type="project" value="UniProtKB"/>
</dbReference>
<dbReference type="GO" id="GO:0021756">
    <property type="term" value="P:striatum development"/>
    <property type="evidence" value="ECO:0007669"/>
    <property type="project" value="Ensembl"/>
</dbReference>
<dbReference type="DisProt" id="DP00420"/>
<dbReference type="FunFam" id="3.30.1330.30:FF:000004">
    <property type="entry name" value="selenocysteine insertion sequence-binding protein 2"/>
    <property type="match status" value="1"/>
</dbReference>
<dbReference type="Gene3D" id="3.30.1330.30">
    <property type="match status" value="1"/>
</dbReference>
<dbReference type="InterPro" id="IPR029064">
    <property type="entry name" value="Ribosomal_eL30-like_sf"/>
</dbReference>
<dbReference type="InterPro" id="IPR004038">
    <property type="entry name" value="Ribosomal_eL8/eL30/eS12/Gad45"/>
</dbReference>
<dbReference type="InterPro" id="IPR040051">
    <property type="entry name" value="SECISBP2"/>
</dbReference>
<dbReference type="PANTHER" id="PTHR13284">
    <property type="entry name" value="GH01354P"/>
    <property type="match status" value="1"/>
</dbReference>
<dbReference type="PANTHER" id="PTHR13284:SF9">
    <property type="entry name" value="SELENOCYSTEINE INSERTION SEQUENCE-BINDING PROTEIN 2"/>
    <property type="match status" value="1"/>
</dbReference>
<dbReference type="Pfam" id="PF01248">
    <property type="entry name" value="Ribosomal_L7Ae"/>
    <property type="match status" value="1"/>
</dbReference>
<dbReference type="SUPFAM" id="SSF55315">
    <property type="entry name" value="L30e-like"/>
    <property type="match status" value="1"/>
</dbReference>
<accession>Q96T21</accession>
<accession>F8W892</accession>
<accession>Q5HYY1</accession>
<accession>Q7L1Z0</accession>
<accession>Q8IYC0</accession>
<accession>Q9H0A1</accession>
<organism>
    <name type="scientific">Homo sapiens</name>
    <name type="common">Human</name>
    <dbReference type="NCBI Taxonomy" id="9606"/>
    <lineage>
        <taxon>Eukaryota</taxon>
        <taxon>Metazoa</taxon>
        <taxon>Chordata</taxon>
        <taxon>Craniata</taxon>
        <taxon>Vertebrata</taxon>
        <taxon>Euteleostomi</taxon>
        <taxon>Mammalia</taxon>
        <taxon>Eutheria</taxon>
        <taxon>Euarchontoglires</taxon>
        <taxon>Primates</taxon>
        <taxon>Haplorrhini</taxon>
        <taxon>Catarrhini</taxon>
        <taxon>Hominidae</taxon>
        <taxon>Homo</taxon>
    </lineage>
</organism>
<comment type="function">
    <text evidence="7">mRNA-binding protein that binds to the SECIS (selenocysteine insertion sequence) element present in the 3'-UTR of mRNAs encoding selenoproteins and facilitates the incorporation of the rare amino acid selenocysteine (PubMed:35709277). Insertion of selenocysteine at UGA codons is mediated by SECISBP2 and EEFSEC: SECISBP2 (1) specifically binds the SECIS sequence once the 80S ribosome encounters an in-frame UGA codon and (2) contacts the RPS27A/eS31 of the 40S ribosome before ribosome stalling (PubMed:35709277). (3) GTP-bound EEFSEC then delivers selenocysteinyl-tRNA(Sec) to the 80S ribosome and adopts a preaccommodated state conformation (PubMed:35709277). (4) After GTP hydrolysis, EEFSEC dissociates from the assembly, selenocysteinyl-tRNA(Sec) accommodates, and peptide bond synthesis and selenoprotein elongation occur (PubMed:35709277).</text>
</comment>
<comment type="interaction">
    <interactant intactId="EBI-954116">
        <id>Q96T21</id>
    </interactant>
    <interactant intactId="EBI-11978259">
        <id>Q92567-2</id>
        <label>FAM168A</label>
    </interactant>
    <organismsDiffer>false</organismsDiffer>
    <experiments>3</experiments>
</comment>
<comment type="interaction">
    <interactant intactId="EBI-954116">
        <id>Q96T21</id>
    </interactant>
    <interactant intactId="EBI-618309">
        <id>Q08379</id>
        <label>GOLGA2</label>
    </interactant>
    <organismsDiffer>false</organismsDiffer>
    <experiments>3</experiments>
</comment>
<comment type="interaction">
    <interactant intactId="EBI-954116">
        <id>Q96T21</id>
    </interactant>
    <interactant intactId="EBI-466029">
        <id>P42858</id>
        <label>HTT</label>
    </interactant>
    <organismsDiffer>false</organismsDiffer>
    <experiments>3</experiments>
</comment>
<comment type="subcellular location">
    <molecule>Isoform 1</molecule>
    <subcellularLocation>
        <location evidence="12">Nucleus</location>
    </subcellularLocation>
</comment>
<comment type="subcellular location">
    <molecule>Isoform 2</molecule>
    <subcellularLocation>
        <location evidence="5">Mitochondrion</location>
    </subcellularLocation>
</comment>
<comment type="alternative products">
    <event type="alternative splicing"/>
    <isoform>
        <id>Q96T21-1</id>
        <name>1</name>
        <sequence type="displayed"/>
    </isoform>
    <isoform>
        <id>Q96T21-2</id>
        <name>2</name>
        <name evidence="10">mtSBP2</name>
        <sequence type="described" ref="VSP_039070 VSP_039071"/>
    </isoform>
    <isoform>
        <id>Q96T21-3</id>
        <name>3</name>
        <name evidence="10">SBP2_delta2</name>
        <sequence type="described" ref="VSP_055755"/>
    </isoform>
</comment>
<comment type="tissue specificity">
    <text evidence="3">Expressed at high levels in testis.</text>
</comment>
<comment type="disease" evidence="4 6">
    <disease id="DI-00015">
        <name>Thyroid hormone metabolism, abnormal, 1</name>
        <acronym>THMA1</acronym>
        <description>A disorder associated with a reduction in type II iodothyronine deiodinase activity.</description>
        <dbReference type="MIM" id="609698"/>
    </disease>
    <text>The disease is caused by variants affecting the gene represented in this entry.</text>
</comment>
<comment type="miscellaneous">
    <molecule>Isoform 2</molecule>
    <text evidence="12">Contains a transit peptide at positions 1-15.</text>
</comment>
<proteinExistence type="evidence at protein level"/>